<sequence>MRCPYCGSEDSQVKDSRPAEDGNAIRRRRICPDCGGRFTTFERVQLRELMIIKKTGRKVPFDRDKLLRSFEIALRKRPVDRDRIERAVSGIVRRLESSGETEIPSEEIGLQVLEALKSLDDVAFVRYASVYRDFSHAEDFEKVIAEISAKIARDPGE</sequence>
<feature type="chain" id="PRO_0000182339" description="Transcriptional repressor NrdR">
    <location>
        <begin position="1"/>
        <end position="157"/>
    </location>
</feature>
<feature type="domain" description="ATP-cone" evidence="1">
    <location>
        <begin position="49"/>
        <end position="139"/>
    </location>
</feature>
<feature type="zinc finger region" evidence="1">
    <location>
        <begin position="3"/>
        <end position="34"/>
    </location>
</feature>
<feature type="region of interest" description="Disordered" evidence="2">
    <location>
        <begin position="1"/>
        <end position="21"/>
    </location>
</feature>
<feature type="compositionally biased region" description="Basic and acidic residues" evidence="2">
    <location>
        <begin position="11"/>
        <end position="21"/>
    </location>
</feature>
<proteinExistence type="inferred from homology"/>
<organism>
    <name type="scientific">Rhizobium meliloti (strain 1021)</name>
    <name type="common">Ensifer meliloti</name>
    <name type="synonym">Sinorhizobium meliloti</name>
    <dbReference type="NCBI Taxonomy" id="266834"/>
    <lineage>
        <taxon>Bacteria</taxon>
        <taxon>Pseudomonadati</taxon>
        <taxon>Pseudomonadota</taxon>
        <taxon>Alphaproteobacteria</taxon>
        <taxon>Hyphomicrobiales</taxon>
        <taxon>Rhizobiaceae</taxon>
        <taxon>Sinorhizobium/Ensifer group</taxon>
        <taxon>Sinorhizobium</taxon>
    </lineage>
</organism>
<reference key="1">
    <citation type="journal article" date="2001" name="Proc. Natl. Acad. Sci. U.S.A.">
        <title>Analysis of the chromosome sequence of the legume symbiont Sinorhizobium meliloti strain 1021.</title>
        <authorList>
            <person name="Capela D."/>
            <person name="Barloy-Hubler F."/>
            <person name="Gouzy J."/>
            <person name="Bothe G."/>
            <person name="Ampe F."/>
            <person name="Batut J."/>
            <person name="Boistard P."/>
            <person name="Becker A."/>
            <person name="Boutry M."/>
            <person name="Cadieu E."/>
            <person name="Dreano S."/>
            <person name="Gloux S."/>
            <person name="Godrie T."/>
            <person name="Goffeau A."/>
            <person name="Kahn D."/>
            <person name="Kiss E."/>
            <person name="Lelaure V."/>
            <person name="Masuy D."/>
            <person name="Pohl T."/>
            <person name="Portetelle D."/>
            <person name="Puehler A."/>
            <person name="Purnelle B."/>
            <person name="Ramsperger U."/>
            <person name="Renard C."/>
            <person name="Thebault P."/>
            <person name="Vandenbol M."/>
            <person name="Weidner S."/>
            <person name="Galibert F."/>
        </authorList>
    </citation>
    <scope>NUCLEOTIDE SEQUENCE [LARGE SCALE GENOMIC DNA]</scope>
    <source>
        <strain>1021</strain>
    </source>
</reference>
<reference key="2">
    <citation type="journal article" date="2001" name="Science">
        <title>The composite genome of the legume symbiont Sinorhizobium meliloti.</title>
        <authorList>
            <person name="Galibert F."/>
            <person name="Finan T.M."/>
            <person name="Long S.R."/>
            <person name="Puehler A."/>
            <person name="Abola P."/>
            <person name="Ampe F."/>
            <person name="Barloy-Hubler F."/>
            <person name="Barnett M.J."/>
            <person name="Becker A."/>
            <person name="Boistard P."/>
            <person name="Bothe G."/>
            <person name="Boutry M."/>
            <person name="Bowser L."/>
            <person name="Buhrmester J."/>
            <person name="Cadieu E."/>
            <person name="Capela D."/>
            <person name="Chain P."/>
            <person name="Cowie A."/>
            <person name="Davis R.W."/>
            <person name="Dreano S."/>
            <person name="Federspiel N.A."/>
            <person name="Fisher R.F."/>
            <person name="Gloux S."/>
            <person name="Godrie T."/>
            <person name="Goffeau A."/>
            <person name="Golding B."/>
            <person name="Gouzy J."/>
            <person name="Gurjal M."/>
            <person name="Hernandez-Lucas I."/>
            <person name="Hong A."/>
            <person name="Huizar L."/>
            <person name="Hyman R.W."/>
            <person name="Jones T."/>
            <person name="Kahn D."/>
            <person name="Kahn M.L."/>
            <person name="Kalman S."/>
            <person name="Keating D.H."/>
            <person name="Kiss E."/>
            <person name="Komp C."/>
            <person name="Lelaure V."/>
            <person name="Masuy D."/>
            <person name="Palm C."/>
            <person name="Peck M.C."/>
            <person name="Pohl T.M."/>
            <person name="Portetelle D."/>
            <person name="Purnelle B."/>
            <person name="Ramsperger U."/>
            <person name="Surzycki R."/>
            <person name="Thebault P."/>
            <person name="Vandenbol M."/>
            <person name="Vorhoelter F.J."/>
            <person name="Weidner S."/>
            <person name="Wells D.H."/>
            <person name="Wong K."/>
            <person name="Yeh K.-C."/>
            <person name="Batut J."/>
        </authorList>
    </citation>
    <scope>NUCLEOTIDE SEQUENCE [LARGE SCALE GENOMIC DNA]</scope>
    <source>
        <strain>1021</strain>
    </source>
</reference>
<keyword id="KW-0067">ATP-binding</keyword>
<keyword id="KW-0238">DNA-binding</keyword>
<keyword id="KW-0479">Metal-binding</keyword>
<keyword id="KW-0547">Nucleotide-binding</keyword>
<keyword id="KW-1185">Reference proteome</keyword>
<keyword id="KW-0678">Repressor</keyword>
<keyword id="KW-0804">Transcription</keyword>
<keyword id="KW-0805">Transcription regulation</keyword>
<keyword id="KW-0862">Zinc</keyword>
<keyword id="KW-0863">Zinc-finger</keyword>
<dbReference type="EMBL" id="AL591688">
    <property type="protein sequence ID" value="CAC45788.1"/>
    <property type="molecule type" value="Genomic_DNA"/>
</dbReference>
<dbReference type="RefSeq" id="NP_385315.1">
    <property type="nucleotide sequence ID" value="NC_003047.1"/>
</dbReference>
<dbReference type="RefSeq" id="WP_003529310.1">
    <property type="nucleotide sequence ID" value="NC_003047.1"/>
</dbReference>
<dbReference type="SMR" id="P58259"/>
<dbReference type="EnsemblBacteria" id="CAC45788">
    <property type="protein sequence ID" value="CAC45788"/>
    <property type="gene ID" value="SMc01771"/>
</dbReference>
<dbReference type="GeneID" id="89575532"/>
<dbReference type="KEGG" id="sme:SMc01771"/>
<dbReference type="PATRIC" id="fig|266834.11.peg.2621"/>
<dbReference type="eggNOG" id="COG1327">
    <property type="taxonomic scope" value="Bacteria"/>
</dbReference>
<dbReference type="HOGENOM" id="CLU_108412_0_1_5"/>
<dbReference type="OrthoDB" id="9807461at2"/>
<dbReference type="PRO" id="PR:P58259"/>
<dbReference type="Proteomes" id="UP000001976">
    <property type="component" value="Chromosome"/>
</dbReference>
<dbReference type="GO" id="GO:0005524">
    <property type="term" value="F:ATP binding"/>
    <property type="evidence" value="ECO:0007669"/>
    <property type="project" value="UniProtKB-KW"/>
</dbReference>
<dbReference type="GO" id="GO:0003677">
    <property type="term" value="F:DNA binding"/>
    <property type="evidence" value="ECO:0007669"/>
    <property type="project" value="UniProtKB-KW"/>
</dbReference>
<dbReference type="GO" id="GO:0008270">
    <property type="term" value="F:zinc ion binding"/>
    <property type="evidence" value="ECO:0007669"/>
    <property type="project" value="UniProtKB-UniRule"/>
</dbReference>
<dbReference type="GO" id="GO:0045892">
    <property type="term" value="P:negative regulation of DNA-templated transcription"/>
    <property type="evidence" value="ECO:0007669"/>
    <property type="project" value="UniProtKB-UniRule"/>
</dbReference>
<dbReference type="HAMAP" id="MF_00440">
    <property type="entry name" value="NrdR"/>
    <property type="match status" value="1"/>
</dbReference>
<dbReference type="InterPro" id="IPR005144">
    <property type="entry name" value="ATP-cone_dom"/>
</dbReference>
<dbReference type="InterPro" id="IPR055173">
    <property type="entry name" value="NrdR-like_N"/>
</dbReference>
<dbReference type="InterPro" id="IPR003796">
    <property type="entry name" value="RNR_NrdR-like"/>
</dbReference>
<dbReference type="NCBIfam" id="TIGR00244">
    <property type="entry name" value="transcriptional regulator NrdR"/>
    <property type="match status" value="1"/>
</dbReference>
<dbReference type="PANTHER" id="PTHR30455">
    <property type="entry name" value="TRANSCRIPTIONAL REPRESSOR NRDR"/>
    <property type="match status" value="1"/>
</dbReference>
<dbReference type="PANTHER" id="PTHR30455:SF2">
    <property type="entry name" value="TRANSCRIPTIONAL REPRESSOR NRDR"/>
    <property type="match status" value="1"/>
</dbReference>
<dbReference type="Pfam" id="PF03477">
    <property type="entry name" value="ATP-cone"/>
    <property type="match status" value="1"/>
</dbReference>
<dbReference type="Pfam" id="PF22811">
    <property type="entry name" value="Zn_ribbon_NrdR"/>
    <property type="match status" value="1"/>
</dbReference>
<dbReference type="PROSITE" id="PS51161">
    <property type="entry name" value="ATP_CONE"/>
    <property type="match status" value="1"/>
</dbReference>
<gene>
    <name evidence="1" type="primary">nrdR</name>
    <name type="ordered locus">R01209</name>
    <name type="ORF">SMc01771</name>
</gene>
<comment type="function">
    <text evidence="1">Negatively regulates transcription of bacterial ribonucleotide reductase nrd genes and operons by binding to NrdR-boxes.</text>
</comment>
<comment type="cofactor">
    <cofactor evidence="1">
        <name>Zn(2+)</name>
        <dbReference type="ChEBI" id="CHEBI:29105"/>
    </cofactor>
    <text evidence="1">Binds 1 zinc ion.</text>
</comment>
<comment type="similarity">
    <text evidence="1">Belongs to the NrdR family.</text>
</comment>
<name>NRDR_RHIME</name>
<protein>
    <recommendedName>
        <fullName evidence="1">Transcriptional repressor NrdR</fullName>
    </recommendedName>
</protein>
<accession>P58259</accession>
<evidence type="ECO:0000255" key="1">
    <source>
        <dbReference type="HAMAP-Rule" id="MF_00440"/>
    </source>
</evidence>
<evidence type="ECO:0000256" key="2">
    <source>
        <dbReference type="SAM" id="MobiDB-lite"/>
    </source>
</evidence>